<sequence length="130" mass="14044">MSEIRSELKYLSSHEWARVEEDGTVTIGITDHAQEALGDVVFVETPEVGSQVSAGEEAGVVESVKAASDIYSPVTGEVIAVNELLEEAPETVNESPYDEGWFFKVKPSDVSELDGAMDSEAYVKSVEDDS</sequence>
<gene>
    <name evidence="1" type="primary">gcvH</name>
    <name type="ordered locus">TERTU_0357</name>
</gene>
<protein>
    <recommendedName>
        <fullName evidence="1">Glycine cleavage system H protein</fullName>
    </recommendedName>
</protein>
<name>GCSH_TERTT</name>
<organism>
    <name type="scientific">Teredinibacter turnerae (strain ATCC 39867 / T7901)</name>
    <dbReference type="NCBI Taxonomy" id="377629"/>
    <lineage>
        <taxon>Bacteria</taxon>
        <taxon>Pseudomonadati</taxon>
        <taxon>Pseudomonadota</taxon>
        <taxon>Gammaproteobacteria</taxon>
        <taxon>Cellvibrionales</taxon>
        <taxon>Cellvibrionaceae</taxon>
        <taxon>Teredinibacter</taxon>
    </lineage>
</organism>
<comment type="function">
    <text evidence="1">The glycine cleavage system catalyzes the degradation of glycine. The H protein shuttles the methylamine group of glycine from the P protein to the T protein.</text>
</comment>
<comment type="cofactor">
    <cofactor evidence="1">
        <name>(R)-lipoate</name>
        <dbReference type="ChEBI" id="CHEBI:83088"/>
    </cofactor>
    <text evidence="1">Binds 1 lipoyl cofactor covalently.</text>
</comment>
<comment type="subunit">
    <text evidence="1">The glycine cleavage system is composed of four proteins: P, T, L and H.</text>
</comment>
<comment type="similarity">
    <text evidence="1">Belongs to the GcvH family.</text>
</comment>
<accession>C5BM96</accession>
<feature type="chain" id="PRO_1000204752" description="Glycine cleavage system H protein">
    <location>
        <begin position="1"/>
        <end position="130"/>
    </location>
</feature>
<feature type="domain" description="Lipoyl-binding" evidence="2">
    <location>
        <begin position="24"/>
        <end position="106"/>
    </location>
</feature>
<feature type="modified residue" description="N6-lipoyllysine" evidence="1">
    <location>
        <position position="65"/>
    </location>
</feature>
<reference key="1">
    <citation type="journal article" date="2009" name="PLoS ONE">
        <title>The complete genome of Teredinibacter turnerae T7901: an intracellular endosymbiont of marine wood-boring bivalves (shipworms).</title>
        <authorList>
            <person name="Yang J.C."/>
            <person name="Madupu R."/>
            <person name="Durkin A.S."/>
            <person name="Ekborg N.A."/>
            <person name="Pedamallu C.S."/>
            <person name="Hostetler J.B."/>
            <person name="Radune D."/>
            <person name="Toms B.S."/>
            <person name="Henrissat B."/>
            <person name="Coutinho P.M."/>
            <person name="Schwarz S."/>
            <person name="Field L."/>
            <person name="Trindade-Silva A.E."/>
            <person name="Soares C.A.G."/>
            <person name="Elshahawi S."/>
            <person name="Hanora A."/>
            <person name="Schmidt E.W."/>
            <person name="Haygood M.G."/>
            <person name="Posfai J."/>
            <person name="Benner J."/>
            <person name="Madinger C."/>
            <person name="Nove J."/>
            <person name="Anton B."/>
            <person name="Chaudhary K."/>
            <person name="Foster J."/>
            <person name="Holman A."/>
            <person name="Kumar S."/>
            <person name="Lessard P.A."/>
            <person name="Luyten Y.A."/>
            <person name="Slatko B."/>
            <person name="Wood N."/>
            <person name="Wu B."/>
            <person name="Teplitski M."/>
            <person name="Mougous J.D."/>
            <person name="Ward N."/>
            <person name="Eisen J.A."/>
            <person name="Badger J.H."/>
            <person name="Distel D.L."/>
        </authorList>
    </citation>
    <scope>NUCLEOTIDE SEQUENCE [LARGE SCALE GENOMIC DNA]</scope>
    <source>
        <strain>ATCC 39867 / T7901</strain>
    </source>
</reference>
<proteinExistence type="inferred from homology"/>
<evidence type="ECO:0000255" key="1">
    <source>
        <dbReference type="HAMAP-Rule" id="MF_00272"/>
    </source>
</evidence>
<evidence type="ECO:0000255" key="2">
    <source>
        <dbReference type="PROSITE-ProRule" id="PRU01066"/>
    </source>
</evidence>
<dbReference type="EMBL" id="CP001614">
    <property type="protein sequence ID" value="ACR11908.1"/>
    <property type="molecule type" value="Genomic_DNA"/>
</dbReference>
<dbReference type="RefSeq" id="WP_015818020.1">
    <property type="nucleotide sequence ID" value="NC_012997.1"/>
</dbReference>
<dbReference type="SMR" id="C5BM96"/>
<dbReference type="STRING" id="377629.TERTU_0357"/>
<dbReference type="KEGG" id="ttu:TERTU_0357"/>
<dbReference type="eggNOG" id="COG0509">
    <property type="taxonomic scope" value="Bacteria"/>
</dbReference>
<dbReference type="HOGENOM" id="CLU_097408_2_0_6"/>
<dbReference type="OrthoDB" id="9796712at2"/>
<dbReference type="Proteomes" id="UP000009080">
    <property type="component" value="Chromosome"/>
</dbReference>
<dbReference type="GO" id="GO:0005829">
    <property type="term" value="C:cytosol"/>
    <property type="evidence" value="ECO:0007669"/>
    <property type="project" value="TreeGrafter"/>
</dbReference>
<dbReference type="GO" id="GO:0005960">
    <property type="term" value="C:glycine cleavage complex"/>
    <property type="evidence" value="ECO:0007669"/>
    <property type="project" value="InterPro"/>
</dbReference>
<dbReference type="GO" id="GO:0019464">
    <property type="term" value="P:glycine decarboxylation via glycine cleavage system"/>
    <property type="evidence" value="ECO:0007669"/>
    <property type="project" value="UniProtKB-UniRule"/>
</dbReference>
<dbReference type="CDD" id="cd06848">
    <property type="entry name" value="GCS_H"/>
    <property type="match status" value="1"/>
</dbReference>
<dbReference type="Gene3D" id="2.40.50.100">
    <property type="match status" value="1"/>
</dbReference>
<dbReference type="HAMAP" id="MF_00272">
    <property type="entry name" value="GcvH"/>
    <property type="match status" value="1"/>
</dbReference>
<dbReference type="InterPro" id="IPR003016">
    <property type="entry name" value="2-oxoA_DH_lipoyl-BS"/>
</dbReference>
<dbReference type="InterPro" id="IPR000089">
    <property type="entry name" value="Biotin_lipoyl"/>
</dbReference>
<dbReference type="InterPro" id="IPR002930">
    <property type="entry name" value="GCV_H"/>
</dbReference>
<dbReference type="InterPro" id="IPR033753">
    <property type="entry name" value="GCV_H/Fam206"/>
</dbReference>
<dbReference type="InterPro" id="IPR017453">
    <property type="entry name" value="GCV_H_sub"/>
</dbReference>
<dbReference type="InterPro" id="IPR011053">
    <property type="entry name" value="Single_hybrid_motif"/>
</dbReference>
<dbReference type="NCBIfam" id="TIGR00527">
    <property type="entry name" value="gcvH"/>
    <property type="match status" value="1"/>
</dbReference>
<dbReference type="NCBIfam" id="NF002270">
    <property type="entry name" value="PRK01202.1"/>
    <property type="match status" value="1"/>
</dbReference>
<dbReference type="PANTHER" id="PTHR11715">
    <property type="entry name" value="GLYCINE CLEAVAGE SYSTEM H PROTEIN"/>
    <property type="match status" value="1"/>
</dbReference>
<dbReference type="PANTHER" id="PTHR11715:SF3">
    <property type="entry name" value="GLYCINE CLEAVAGE SYSTEM H PROTEIN-RELATED"/>
    <property type="match status" value="1"/>
</dbReference>
<dbReference type="Pfam" id="PF01597">
    <property type="entry name" value="GCV_H"/>
    <property type="match status" value="1"/>
</dbReference>
<dbReference type="SUPFAM" id="SSF51230">
    <property type="entry name" value="Single hybrid motif"/>
    <property type="match status" value="1"/>
</dbReference>
<dbReference type="PROSITE" id="PS50968">
    <property type="entry name" value="BIOTINYL_LIPOYL"/>
    <property type="match status" value="1"/>
</dbReference>
<dbReference type="PROSITE" id="PS00189">
    <property type="entry name" value="LIPOYL"/>
    <property type="match status" value="1"/>
</dbReference>
<keyword id="KW-0450">Lipoyl</keyword>
<keyword id="KW-1185">Reference proteome</keyword>